<accession>B0K622</accession>
<feature type="chain" id="PRO_1000095474" description="ATP phosphoribosyltransferase regulatory subunit">
    <location>
        <begin position="1"/>
        <end position="380"/>
    </location>
</feature>
<reference key="1">
    <citation type="submission" date="2008-01" db="EMBL/GenBank/DDBJ databases">
        <title>Complete sequence of Thermoanaerobacter sp. X514.</title>
        <authorList>
            <consortium name="US DOE Joint Genome Institute"/>
            <person name="Copeland A."/>
            <person name="Lucas S."/>
            <person name="Lapidus A."/>
            <person name="Barry K."/>
            <person name="Glavina del Rio T."/>
            <person name="Dalin E."/>
            <person name="Tice H."/>
            <person name="Pitluck S."/>
            <person name="Bruce D."/>
            <person name="Goodwin L."/>
            <person name="Saunders E."/>
            <person name="Brettin T."/>
            <person name="Detter J.C."/>
            <person name="Han C."/>
            <person name="Schmutz J."/>
            <person name="Larimer F."/>
            <person name="Land M."/>
            <person name="Hauser L."/>
            <person name="Kyrpides N."/>
            <person name="Kim E."/>
            <person name="Hemme C."/>
            <person name="Fields M.W."/>
            <person name="He Z."/>
            <person name="Zhou J."/>
            <person name="Richardson P."/>
        </authorList>
    </citation>
    <scope>NUCLEOTIDE SEQUENCE [LARGE SCALE GENOMIC DNA]</scope>
    <source>
        <strain>X514</strain>
    </source>
</reference>
<name>HISZ_THEPX</name>
<organism>
    <name type="scientific">Thermoanaerobacter sp. (strain X514)</name>
    <dbReference type="NCBI Taxonomy" id="399726"/>
    <lineage>
        <taxon>Bacteria</taxon>
        <taxon>Bacillati</taxon>
        <taxon>Bacillota</taxon>
        <taxon>Clostridia</taxon>
        <taxon>Thermoanaerobacterales</taxon>
        <taxon>Thermoanaerobacteraceae</taxon>
        <taxon>Thermoanaerobacter</taxon>
    </lineage>
</organism>
<evidence type="ECO:0000255" key="1">
    <source>
        <dbReference type="HAMAP-Rule" id="MF_00125"/>
    </source>
</evidence>
<proteinExistence type="inferred from homology"/>
<comment type="function">
    <text evidence="1">Required for the first step of histidine biosynthesis. May allow the feedback regulation of ATP phosphoribosyltransferase activity by histidine.</text>
</comment>
<comment type="pathway">
    <text evidence="1">Amino-acid biosynthesis; L-histidine biosynthesis; L-histidine from 5-phospho-alpha-D-ribose 1-diphosphate: step 1/9.</text>
</comment>
<comment type="subunit">
    <text evidence="1">Heteromultimer composed of HisG and HisZ subunits.</text>
</comment>
<comment type="subcellular location">
    <subcellularLocation>
        <location evidence="1">Cytoplasm</location>
    </subcellularLocation>
</comment>
<comment type="miscellaneous">
    <text>This function is generally fulfilled by the C-terminal part of HisG, which is missing in some bacteria such as this one.</text>
</comment>
<comment type="similarity">
    <text evidence="1">Belongs to the class-II aminoacyl-tRNA synthetase family. HisZ subfamily.</text>
</comment>
<sequence>MIYLPDGVQDFLPEEYKFKRKIEEKFREVFIKFGYQEIMPPTFEYNDNFSVLFDENNLYRFFDKKGNILALRPDVTTQIARIVSTKLKGSFPLKLCYVANVYRYDDPQVGKMREFTQAGIELIGTNHEESDAEIIAVAIEALKSIGIEDFKVDVGQVEFFKRVVEDLELQNEEINLLREFLQQKNQSAIEEFINDKGIRGKKAKFLSELPLLFGGEEVLKRAKELYDTPKLGETIDYLERVYRILKDFGMEEYISFDLGMVQNLNYYTGIIFRCFVKGIGYAICTGGRYDGLLGIFGEHIPATGFAISVERSMLALQKQKKDIIDKSWRVLIKYKENLRSNAYKKATLLRGEGKIVEMYSYEKAKHVDENSFDEIIDMEE</sequence>
<keyword id="KW-0028">Amino-acid biosynthesis</keyword>
<keyword id="KW-0963">Cytoplasm</keyword>
<keyword id="KW-0368">Histidine biosynthesis</keyword>
<protein>
    <recommendedName>
        <fullName evidence="1">ATP phosphoribosyltransferase regulatory subunit</fullName>
    </recommendedName>
</protein>
<dbReference type="EMBL" id="CP000923">
    <property type="protein sequence ID" value="ABY92298.1"/>
    <property type="molecule type" value="Genomic_DNA"/>
</dbReference>
<dbReference type="RefSeq" id="WP_009052792.1">
    <property type="nucleotide sequence ID" value="NC_010320.1"/>
</dbReference>
<dbReference type="SMR" id="B0K622"/>
<dbReference type="KEGG" id="tex:Teth514_0999"/>
<dbReference type="HOGENOM" id="CLU_025113_0_2_9"/>
<dbReference type="UniPathway" id="UPA00031">
    <property type="reaction ID" value="UER00006"/>
</dbReference>
<dbReference type="Proteomes" id="UP000002155">
    <property type="component" value="Chromosome"/>
</dbReference>
<dbReference type="GO" id="GO:0005737">
    <property type="term" value="C:cytoplasm"/>
    <property type="evidence" value="ECO:0007669"/>
    <property type="project" value="UniProtKB-SubCell"/>
</dbReference>
<dbReference type="GO" id="GO:0140096">
    <property type="term" value="F:catalytic activity, acting on a protein"/>
    <property type="evidence" value="ECO:0007669"/>
    <property type="project" value="UniProtKB-ARBA"/>
</dbReference>
<dbReference type="GO" id="GO:0004821">
    <property type="term" value="F:histidine-tRNA ligase activity"/>
    <property type="evidence" value="ECO:0007669"/>
    <property type="project" value="TreeGrafter"/>
</dbReference>
<dbReference type="GO" id="GO:0016740">
    <property type="term" value="F:transferase activity"/>
    <property type="evidence" value="ECO:0007669"/>
    <property type="project" value="UniProtKB-ARBA"/>
</dbReference>
<dbReference type="GO" id="GO:0006427">
    <property type="term" value="P:histidyl-tRNA aminoacylation"/>
    <property type="evidence" value="ECO:0007669"/>
    <property type="project" value="TreeGrafter"/>
</dbReference>
<dbReference type="GO" id="GO:0000105">
    <property type="term" value="P:L-histidine biosynthetic process"/>
    <property type="evidence" value="ECO:0007669"/>
    <property type="project" value="UniProtKB-UniRule"/>
</dbReference>
<dbReference type="CDD" id="cd00773">
    <property type="entry name" value="HisRS-like_core"/>
    <property type="match status" value="1"/>
</dbReference>
<dbReference type="Gene3D" id="3.30.930.10">
    <property type="entry name" value="Bira Bifunctional Protein, Domain 2"/>
    <property type="match status" value="1"/>
</dbReference>
<dbReference type="HAMAP" id="MF_00125">
    <property type="entry name" value="HisZ"/>
    <property type="match status" value="1"/>
</dbReference>
<dbReference type="InterPro" id="IPR006195">
    <property type="entry name" value="aa-tRNA-synth_II"/>
</dbReference>
<dbReference type="InterPro" id="IPR045864">
    <property type="entry name" value="aa-tRNA-synth_II/BPL/LPL"/>
</dbReference>
<dbReference type="InterPro" id="IPR041715">
    <property type="entry name" value="HisRS-like_core"/>
</dbReference>
<dbReference type="InterPro" id="IPR004516">
    <property type="entry name" value="HisRS/HisZ"/>
</dbReference>
<dbReference type="InterPro" id="IPR004517">
    <property type="entry name" value="HisZ"/>
</dbReference>
<dbReference type="NCBIfam" id="TIGR00443">
    <property type="entry name" value="hisZ_biosyn_reg"/>
    <property type="match status" value="1"/>
</dbReference>
<dbReference type="PANTHER" id="PTHR43707:SF6">
    <property type="entry name" value="ATP PHOSPHORIBOSYLTRANSFERASE REGULATORY SUBUNIT"/>
    <property type="match status" value="1"/>
</dbReference>
<dbReference type="PANTHER" id="PTHR43707">
    <property type="entry name" value="HISTIDYL-TRNA SYNTHETASE"/>
    <property type="match status" value="1"/>
</dbReference>
<dbReference type="Pfam" id="PF13393">
    <property type="entry name" value="tRNA-synt_His"/>
    <property type="match status" value="1"/>
</dbReference>
<dbReference type="PIRSF" id="PIRSF001549">
    <property type="entry name" value="His-tRNA_synth"/>
    <property type="match status" value="1"/>
</dbReference>
<dbReference type="SUPFAM" id="SSF55681">
    <property type="entry name" value="Class II aaRS and biotin synthetases"/>
    <property type="match status" value="1"/>
</dbReference>
<dbReference type="PROSITE" id="PS50862">
    <property type="entry name" value="AA_TRNA_LIGASE_II"/>
    <property type="match status" value="1"/>
</dbReference>
<gene>
    <name evidence="1" type="primary">hisZ</name>
    <name type="ordered locus">Teth514_0999</name>
</gene>